<organism>
    <name type="scientific">Scolopendra mutilans</name>
    <name type="common">Chinese red-headed centipede</name>
    <name type="synonym">Scolopendra subspinipes mutilans</name>
    <dbReference type="NCBI Taxonomy" id="2836329"/>
    <lineage>
        <taxon>Eukaryota</taxon>
        <taxon>Metazoa</taxon>
        <taxon>Ecdysozoa</taxon>
        <taxon>Arthropoda</taxon>
        <taxon>Myriapoda</taxon>
        <taxon>Chilopoda</taxon>
        <taxon>Pleurostigmophora</taxon>
        <taxon>Scolopendromorpha</taxon>
        <taxon>Scolopendridae</taxon>
        <taxon>Scolopendra</taxon>
    </lineage>
</organism>
<sequence>MKNKFAALVITLFVLVLAIDNVTTECLEGCECNQDSTGKTCRPKQGSNVSPAVCLAQYCYHGYC</sequence>
<keyword id="KW-1015">Disulfide bond</keyword>
<keyword id="KW-0528">Neurotoxin</keyword>
<keyword id="KW-0964">Secreted</keyword>
<keyword id="KW-0732">Signal</keyword>
<keyword id="KW-0800">Toxin</keyword>
<comment type="subcellular location">
    <subcellularLocation>
        <location evidence="5">Secreted</location>
    </subcellularLocation>
</comment>
<comment type="tissue specificity">
    <text evidence="5">Expressed by the venom gland.</text>
</comment>
<comment type="PTM">
    <text evidence="4">Contains 3 disulfide bonds.</text>
</comment>
<comment type="similarity">
    <text evidence="4">Belongs to the scolopendra neurotoxin 6 family.</text>
</comment>
<protein>
    <recommendedName>
        <fullName evidence="3">Putative neurotoxin 6</fullName>
    </recommendedName>
    <alternativeName>
        <fullName evidence="6">Putative neurotoxin 7</fullName>
    </alternativeName>
</protein>
<evidence type="ECO:0000250" key="1">
    <source>
        <dbReference type="UniProtKB" id="I6RA76"/>
    </source>
</evidence>
<evidence type="ECO:0000255" key="2"/>
<evidence type="ECO:0000303" key="3">
    <source>
    </source>
</evidence>
<evidence type="ECO:0000305" key="4"/>
<evidence type="ECO:0000305" key="5">
    <source>
    </source>
</evidence>
<evidence type="ECO:0000312" key="6">
    <source>
        <dbReference type="EMBL" id="AFM55026.1"/>
    </source>
</evidence>
<name>PNX66_SCOMU</name>
<feature type="signal peptide" evidence="2">
    <location>
        <begin position="1"/>
        <end position="24"/>
    </location>
</feature>
<feature type="chain" id="PRO_0000425494" description="Putative neurotoxin 6" evidence="1">
    <location>
        <begin position="25"/>
        <end position="64"/>
    </location>
</feature>
<dbReference type="EMBL" id="JQ757079">
    <property type="protein sequence ID" value="AFM55026.1"/>
    <property type="molecule type" value="mRNA"/>
</dbReference>
<dbReference type="GO" id="GO:0005576">
    <property type="term" value="C:extracellular region"/>
    <property type="evidence" value="ECO:0007669"/>
    <property type="project" value="UniProtKB-SubCell"/>
</dbReference>
<dbReference type="GO" id="GO:0090729">
    <property type="term" value="F:toxin activity"/>
    <property type="evidence" value="ECO:0007669"/>
    <property type="project" value="UniProtKB-KW"/>
</dbReference>
<accession>I6R1S4</accession>
<proteinExistence type="inferred from homology"/>
<reference key="1">
    <citation type="journal article" date="2012" name="Mol. Cell. Proteomics">
        <title>Chemical punch packed in venoms makes centipedes excellent predators.</title>
        <authorList>
            <person name="Yang S."/>
            <person name="Liu Z."/>
            <person name="Xiao Y."/>
            <person name="Li Y."/>
            <person name="Rong M."/>
            <person name="Liang S."/>
            <person name="Zhang Z."/>
            <person name="Yu H."/>
            <person name="King G.F."/>
            <person name="Lai R."/>
        </authorList>
    </citation>
    <scope>NUCLEOTIDE SEQUENCE [MRNA]</scope>
    <source>
        <tissue>Venom gland</tissue>
    </source>
</reference>